<evidence type="ECO:0000255" key="1">
    <source>
        <dbReference type="HAMAP-Rule" id="MF_01527"/>
    </source>
</evidence>
<sequence>MSAIPDVQSTPDTRNIVIQRVGVKGVRYPITVKTSSGVQPSVGSWNMYVRLTEEQKGTHMSRFIALLEENNQPLDVAVFGALMRKMLVLLDADAGRIEVSFPYFINKTAPVSGVQSLMDYEVGLTGEMKNGELEVTLKVLVPVTSLCPCSKKISAYGAHNQRSHITVHAVLNGDLVVEELIAKIEEQASCELYGLLKRPDEKYVTERAYDNPKFVEDLVRDVAGMLNKDERVLAYTLEAENFESIHNHSAYALIERDKRLS</sequence>
<organism>
    <name type="scientific">Herminiimonas arsenicoxydans</name>
    <dbReference type="NCBI Taxonomy" id="204773"/>
    <lineage>
        <taxon>Bacteria</taxon>
        <taxon>Pseudomonadati</taxon>
        <taxon>Pseudomonadota</taxon>
        <taxon>Betaproteobacteria</taxon>
        <taxon>Burkholderiales</taxon>
        <taxon>Oxalobacteraceae</taxon>
        <taxon>Herminiimonas</taxon>
    </lineage>
</organism>
<dbReference type="EC" id="3.5.4.16" evidence="1"/>
<dbReference type="EMBL" id="CU207211">
    <property type="protein sequence ID" value="CAL60507.1"/>
    <property type="molecule type" value="Genomic_DNA"/>
</dbReference>
<dbReference type="SMR" id="A4G1X0"/>
<dbReference type="STRING" id="204773.HEAR0280"/>
<dbReference type="KEGG" id="har:HEAR0280"/>
<dbReference type="eggNOG" id="COG1469">
    <property type="taxonomic scope" value="Bacteria"/>
</dbReference>
<dbReference type="HOGENOM" id="CLU_062816_1_1_4"/>
<dbReference type="UniPathway" id="UPA00848">
    <property type="reaction ID" value="UER00151"/>
</dbReference>
<dbReference type="Proteomes" id="UP000006697">
    <property type="component" value="Chromosome"/>
</dbReference>
<dbReference type="GO" id="GO:0003934">
    <property type="term" value="F:GTP cyclohydrolase I activity"/>
    <property type="evidence" value="ECO:0007669"/>
    <property type="project" value="UniProtKB-UniRule"/>
</dbReference>
<dbReference type="GO" id="GO:0046654">
    <property type="term" value="P:tetrahydrofolate biosynthetic process"/>
    <property type="evidence" value="ECO:0007669"/>
    <property type="project" value="UniProtKB-UniRule"/>
</dbReference>
<dbReference type="Gene3D" id="3.10.270.10">
    <property type="entry name" value="Urate Oxidase"/>
    <property type="match status" value="1"/>
</dbReference>
<dbReference type="HAMAP" id="MF_01527_B">
    <property type="entry name" value="GTP_cyclohydrol_B"/>
    <property type="match status" value="1"/>
</dbReference>
<dbReference type="InterPro" id="IPR022838">
    <property type="entry name" value="GTP_cyclohydrolase_FolE2"/>
</dbReference>
<dbReference type="InterPro" id="IPR003801">
    <property type="entry name" value="GTP_cyclohydrolase_FolE2/MptA"/>
</dbReference>
<dbReference type="NCBIfam" id="NF010200">
    <property type="entry name" value="PRK13674.1-1"/>
    <property type="match status" value="1"/>
</dbReference>
<dbReference type="PANTHER" id="PTHR36445">
    <property type="entry name" value="GTP CYCLOHYDROLASE MPTA"/>
    <property type="match status" value="1"/>
</dbReference>
<dbReference type="PANTHER" id="PTHR36445:SF1">
    <property type="entry name" value="GTP CYCLOHYDROLASE MPTA"/>
    <property type="match status" value="1"/>
</dbReference>
<dbReference type="Pfam" id="PF02649">
    <property type="entry name" value="GCHY-1"/>
    <property type="match status" value="1"/>
</dbReference>
<feature type="chain" id="PRO_0000297506" description="GTP cyclohydrolase FolE2">
    <location>
        <begin position="1"/>
        <end position="261"/>
    </location>
</feature>
<feature type="site" description="May be catalytically important" evidence="1">
    <location>
        <position position="147"/>
    </location>
</feature>
<comment type="function">
    <text evidence="1">Converts GTP to 7,8-dihydroneopterin triphosphate.</text>
</comment>
<comment type="catalytic activity">
    <reaction evidence="1">
        <text>GTP + H2O = 7,8-dihydroneopterin 3'-triphosphate + formate + H(+)</text>
        <dbReference type="Rhea" id="RHEA:17473"/>
        <dbReference type="ChEBI" id="CHEBI:15377"/>
        <dbReference type="ChEBI" id="CHEBI:15378"/>
        <dbReference type="ChEBI" id="CHEBI:15740"/>
        <dbReference type="ChEBI" id="CHEBI:37565"/>
        <dbReference type="ChEBI" id="CHEBI:58462"/>
        <dbReference type="EC" id="3.5.4.16"/>
    </reaction>
</comment>
<comment type="pathway">
    <text evidence="1">Cofactor biosynthesis; 7,8-dihydroneopterin triphosphate biosynthesis; 7,8-dihydroneopterin triphosphate from GTP: step 1/1.</text>
</comment>
<comment type="similarity">
    <text evidence="1">Belongs to the GTP cyclohydrolase IV family.</text>
</comment>
<reference key="1">
    <citation type="journal article" date="2007" name="PLoS Genet.">
        <title>A tale of two oxidation states: bacterial colonization of arsenic-rich environments.</title>
        <authorList>
            <person name="Muller D."/>
            <person name="Medigue C."/>
            <person name="Koechler S."/>
            <person name="Barbe V."/>
            <person name="Barakat M."/>
            <person name="Talla E."/>
            <person name="Bonnefoy V."/>
            <person name="Krin E."/>
            <person name="Arsene-Ploetze F."/>
            <person name="Carapito C."/>
            <person name="Chandler M."/>
            <person name="Cournoyer B."/>
            <person name="Cruveiller S."/>
            <person name="Dossat C."/>
            <person name="Duval S."/>
            <person name="Heymann M."/>
            <person name="Leize E."/>
            <person name="Lieutaud A."/>
            <person name="Lievremont D."/>
            <person name="Makita Y."/>
            <person name="Mangenot S."/>
            <person name="Nitschke W."/>
            <person name="Ortet P."/>
            <person name="Perdrial N."/>
            <person name="Schoepp B."/>
            <person name="Siguier P."/>
            <person name="Simeonova D.D."/>
            <person name="Rouy Z."/>
            <person name="Segurens B."/>
            <person name="Turlin E."/>
            <person name="Vallenet D."/>
            <person name="van Dorsselaer A."/>
            <person name="Weiss S."/>
            <person name="Weissenbach J."/>
            <person name="Lett M.-C."/>
            <person name="Danchin A."/>
            <person name="Bertin P.N."/>
        </authorList>
    </citation>
    <scope>NUCLEOTIDE SEQUENCE [LARGE SCALE GENOMIC DNA]</scope>
    <source>
        <strain>ULPAs1</strain>
    </source>
</reference>
<gene>
    <name evidence="1" type="primary">folE2</name>
    <name type="ordered locus">HEAR0280</name>
</gene>
<protein>
    <recommendedName>
        <fullName evidence="1">GTP cyclohydrolase FolE2</fullName>
        <ecNumber evidence="1">3.5.4.16</ecNumber>
    </recommendedName>
</protein>
<proteinExistence type="inferred from homology"/>
<keyword id="KW-0378">Hydrolase</keyword>
<keyword id="KW-1185">Reference proteome</keyword>
<name>GCH4_HERAR</name>
<accession>A4G1X0</accession>